<comment type="function">
    <text evidence="1">Catalyzes the reduction of the glycolytic intermediate dihydroxyacetone phosphate (DHAP) to sn-glycerol 3-phosphate (G3P), the key precursor for phospholipid synthesis.</text>
</comment>
<comment type="catalytic activity">
    <reaction evidence="1">
        <text>sn-glycerol 3-phosphate + NAD(+) = dihydroxyacetone phosphate + NADH + H(+)</text>
        <dbReference type="Rhea" id="RHEA:11092"/>
        <dbReference type="ChEBI" id="CHEBI:15378"/>
        <dbReference type="ChEBI" id="CHEBI:57540"/>
        <dbReference type="ChEBI" id="CHEBI:57597"/>
        <dbReference type="ChEBI" id="CHEBI:57642"/>
        <dbReference type="ChEBI" id="CHEBI:57945"/>
        <dbReference type="EC" id="1.1.1.94"/>
    </reaction>
    <physiologicalReaction direction="right-to-left" evidence="1">
        <dbReference type="Rhea" id="RHEA:11094"/>
    </physiologicalReaction>
</comment>
<comment type="catalytic activity">
    <reaction evidence="1">
        <text>sn-glycerol 3-phosphate + NADP(+) = dihydroxyacetone phosphate + NADPH + H(+)</text>
        <dbReference type="Rhea" id="RHEA:11096"/>
        <dbReference type="ChEBI" id="CHEBI:15378"/>
        <dbReference type="ChEBI" id="CHEBI:57597"/>
        <dbReference type="ChEBI" id="CHEBI:57642"/>
        <dbReference type="ChEBI" id="CHEBI:57783"/>
        <dbReference type="ChEBI" id="CHEBI:58349"/>
        <dbReference type="EC" id="1.1.1.94"/>
    </reaction>
    <physiologicalReaction direction="right-to-left" evidence="1">
        <dbReference type="Rhea" id="RHEA:11098"/>
    </physiologicalReaction>
</comment>
<comment type="pathway">
    <text evidence="1">Membrane lipid metabolism; glycerophospholipid metabolism.</text>
</comment>
<comment type="subcellular location">
    <subcellularLocation>
        <location evidence="1">Cytoplasm</location>
    </subcellularLocation>
</comment>
<comment type="similarity">
    <text evidence="1">Belongs to the NAD-dependent glycerol-3-phosphate dehydrogenase family.</text>
</comment>
<dbReference type="EC" id="1.1.1.94" evidence="1"/>
<dbReference type="EMBL" id="CP001097">
    <property type="protein sequence ID" value="ACD91437.1"/>
    <property type="molecule type" value="Genomic_DNA"/>
</dbReference>
<dbReference type="RefSeq" id="WP_012467302.1">
    <property type="nucleotide sequence ID" value="NC_010803.1"/>
</dbReference>
<dbReference type="SMR" id="B3EI28"/>
<dbReference type="STRING" id="290315.Clim_2416"/>
<dbReference type="KEGG" id="cli:Clim_2416"/>
<dbReference type="eggNOG" id="COG0240">
    <property type="taxonomic scope" value="Bacteria"/>
</dbReference>
<dbReference type="HOGENOM" id="CLU_033449_0_2_10"/>
<dbReference type="OrthoDB" id="9812273at2"/>
<dbReference type="UniPathway" id="UPA00940"/>
<dbReference type="Proteomes" id="UP000008841">
    <property type="component" value="Chromosome"/>
</dbReference>
<dbReference type="GO" id="GO:0005829">
    <property type="term" value="C:cytosol"/>
    <property type="evidence" value="ECO:0007669"/>
    <property type="project" value="TreeGrafter"/>
</dbReference>
<dbReference type="GO" id="GO:0047952">
    <property type="term" value="F:glycerol-3-phosphate dehydrogenase [NAD(P)+] activity"/>
    <property type="evidence" value="ECO:0007669"/>
    <property type="project" value="UniProtKB-UniRule"/>
</dbReference>
<dbReference type="GO" id="GO:0051287">
    <property type="term" value="F:NAD binding"/>
    <property type="evidence" value="ECO:0007669"/>
    <property type="project" value="InterPro"/>
</dbReference>
<dbReference type="GO" id="GO:0005975">
    <property type="term" value="P:carbohydrate metabolic process"/>
    <property type="evidence" value="ECO:0007669"/>
    <property type="project" value="InterPro"/>
</dbReference>
<dbReference type="GO" id="GO:0046167">
    <property type="term" value="P:glycerol-3-phosphate biosynthetic process"/>
    <property type="evidence" value="ECO:0007669"/>
    <property type="project" value="UniProtKB-UniRule"/>
</dbReference>
<dbReference type="GO" id="GO:0046168">
    <property type="term" value="P:glycerol-3-phosphate catabolic process"/>
    <property type="evidence" value="ECO:0007669"/>
    <property type="project" value="InterPro"/>
</dbReference>
<dbReference type="GO" id="GO:0006650">
    <property type="term" value="P:glycerophospholipid metabolic process"/>
    <property type="evidence" value="ECO:0007669"/>
    <property type="project" value="UniProtKB-UniRule"/>
</dbReference>
<dbReference type="GO" id="GO:0008654">
    <property type="term" value="P:phospholipid biosynthetic process"/>
    <property type="evidence" value="ECO:0007669"/>
    <property type="project" value="UniProtKB-KW"/>
</dbReference>
<dbReference type="FunFam" id="1.10.1040.10:FF:000001">
    <property type="entry name" value="Glycerol-3-phosphate dehydrogenase [NAD(P)+]"/>
    <property type="match status" value="1"/>
</dbReference>
<dbReference type="FunFam" id="3.40.50.720:FF:000019">
    <property type="entry name" value="Glycerol-3-phosphate dehydrogenase [NAD(P)+]"/>
    <property type="match status" value="1"/>
</dbReference>
<dbReference type="Gene3D" id="1.10.1040.10">
    <property type="entry name" value="N-(1-d-carboxylethyl)-l-norvaline Dehydrogenase, domain 2"/>
    <property type="match status" value="1"/>
</dbReference>
<dbReference type="Gene3D" id="3.40.50.720">
    <property type="entry name" value="NAD(P)-binding Rossmann-like Domain"/>
    <property type="match status" value="1"/>
</dbReference>
<dbReference type="HAMAP" id="MF_00394">
    <property type="entry name" value="NAD_Glyc3P_dehydrog"/>
    <property type="match status" value="1"/>
</dbReference>
<dbReference type="InterPro" id="IPR008927">
    <property type="entry name" value="6-PGluconate_DH-like_C_sf"/>
</dbReference>
<dbReference type="InterPro" id="IPR013328">
    <property type="entry name" value="6PGD_dom2"/>
</dbReference>
<dbReference type="InterPro" id="IPR006168">
    <property type="entry name" value="G3P_DH_NAD-dep"/>
</dbReference>
<dbReference type="InterPro" id="IPR006109">
    <property type="entry name" value="G3P_DH_NAD-dep_C"/>
</dbReference>
<dbReference type="InterPro" id="IPR011128">
    <property type="entry name" value="G3P_DH_NAD-dep_N"/>
</dbReference>
<dbReference type="InterPro" id="IPR036291">
    <property type="entry name" value="NAD(P)-bd_dom_sf"/>
</dbReference>
<dbReference type="NCBIfam" id="NF000940">
    <property type="entry name" value="PRK00094.1-2"/>
    <property type="match status" value="1"/>
</dbReference>
<dbReference type="NCBIfam" id="NF000941">
    <property type="entry name" value="PRK00094.1-3"/>
    <property type="match status" value="1"/>
</dbReference>
<dbReference type="NCBIfam" id="NF000942">
    <property type="entry name" value="PRK00094.1-4"/>
    <property type="match status" value="1"/>
</dbReference>
<dbReference type="PANTHER" id="PTHR11728">
    <property type="entry name" value="GLYCEROL-3-PHOSPHATE DEHYDROGENASE"/>
    <property type="match status" value="1"/>
</dbReference>
<dbReference type="PANTHER" id="PTHR11728:SF1">
    <property type="entry name" value="GLYCEROL-3-PHOSPHATE DEHYDROGENASE [NAD(+)] 2, CHLOROPLASTIC"/>
    <property type="match status" value="1"/>
</dbReference>
<dbReference type="Pfam" id="PF07479">
    <property type="entry name" value="NAD_Gly3P_dh_C"/>
    <property type="match status" value="1"/>
</dbReference>
<dbReference type="Pfam" id="PF01210">
    <property type="entry name" value="NAD_Gly3P_dh_N"/>
    <property type="match status" value="1"/>
</dbReference>
<dbReference type="PIRSF" id="PIRSF000114">
    <property type="entry name" value="Glycerol-3-P_dh"/>
    <property type="match status" value="1"/>
</dbReference>
<dbReference type="PRINTS" id="PR00077">
    <property type="entry name" value="GPDHDRGNASE"/>
</dbReference>
<dbReference type="SUPFAM" id="SSF48179">
    <property type="entry name" value="6-phosphogluconate dehydrogenase C-terminal domain-like"/>
    <property type="match status" value="1"/>
</dbReference>
<dbReference type="SUPFAM" id="SSF51735">
    <property type="entry name" value="NAD(P)-binding Rossmann-fold domains"/>
    <property type="match status" value="1"/>
</dbReference>
<dbReference type="PROSITE" id="PS00957">
    <property type="entry name" value="NAD_G3PDH"/>
    <property type="match status" value="1"/>
</dbReference>
<evidence type="ECO:0000255" key="1">
    <source>
        <dbReference type="HAMAP-Rule" id="MF_00394"/>
    </source>
</evidence>
<sequence>MHIAVLGAGSWGTTLAVLLARKGYAVNLWAHRPEFADQLAAERENRRYLNGVRFPDTLRVFTSLHEAVSPADMVVTAVPSQALRETVEQIRDLPMQGRVIVNVAKGIELKTGKRMSEVLLEALPGVRISGVAALYGPSHAEEVSKEQPTTVVASSPSVETANRVQEVFHTSMFRVYTNTDIIGVEIAGSVKNIIAIAAGISDGIGYGDNAKAAIITRGLAEMSRLAVSLGGDPVTVSGLAGIGDLVVTCLSRHSRNRYVGEEIGRGRSLDDVVAHMNMVAEGVFTSKAVYDLSRTKGVEMPITQAVYEMLFEGKPVQQAILDLMTREPKKEVY</sequence>
<gene>
    <name evidence="1" type="primary">gpsA</name>
    <name type="ordered locus">Clim_2416</name>
</gene>
<proteinExistence type="inferred from homology"/>
<protein>
    <recommendedName>
        <fullName evidence="1">Glycerol-3-phosphate dehydrogenase [NAD(P)+]</fullName>
        <ecNumber evidence="1">1.1.1.94</ecNumber>
    </recommendedName>
    <alternativeName>
        <fullName evidence="1">NAD(P)(+)-dependent glycerol-3-phosphate dehydrogenase</fullName>
    </alternativeName>
    <alternativeName>
        <fullName evidence="1">NAD(P)H-dependent dihydroxyacetone-phosphate reductase</fullName>
    </alternativeName>
</protein>
<accession>B3EI28</accession>
<reference key="1">
    <citation type="submission" date="2008-05" db="EMBL/GenBank/DDBJ databases">
        <title>Complete sequence of Chlorobium limicola DSM 245.</title>
        <authorList>
            <consortium name="US DOE Joint Genome Institute"/>
            <person name="Lucas S."/>
            <person name="Copeland A."/>
            <person name="Lapidus A."/>
            <person name="Glavina del Rio T."/>
            <person name="Dalin E."/>
            <person name="Tice H."/>
            <person name="Bruce D."/>
            <person name="Goodwin L."/>
            <person name="Pitluck S."/>
            <person name="Schmutz J."/>
            <person name="Larimer F."/>
            <person name="Land M."/>
            <person name="Hauser L."/>
            <person name="Kyrpides N."/>
            <person name="Ovchinnikova G."/>
            <person name="Zhao F."/>
            <person name="Li T."/>
            <person name="Liu Z."/>
            <person name="Overmann J."/>
            <person name="Bryant D.A."/>
            <person name="Richardson P."/>
        </authorList>
    </citation>
    <scope>NUCLEOTIDE SEQUENCE [LARGE SCALE GENOMIC DNA]</scope>
    <source>
        <strain>DSM 245 / NBRC 103803 / 6330</strain>
    </source>
</reference>
<name>GPDA_CHLL2</name>
<feature type="chain" id="PRO_1000123129" description="Glycerol-3-phosphate dehydrogenase [NAD(P)+]">
    <location>
        <begin position="1"/>
        <end position="333"/>
    </location>
</feature>
<feature type="active site" description="Proton acceptor" evidence="1">
    <location>
        <position position="191"/>
    </location>
</feature>
<feature type="binding site" evidence="1">
    <location>
        <position position="10"/>
    </location>
    <ligand>
        <name>NADPH</name>
        <dbReference type="ChEBI" id="CHEBI:57783"/>
    </ligand>
</feature>
<feature type="binding site" evidence="1">
    <location>
        <position position="11"/>
    </location>
    <ligand>
        <name>NADPH</name>
        <dbReference type="ChEBI" id="CHEBI:57783"/>
    </ligand>
</feature>
<feature type="binding site" evidence="1">
    <location>
        <position position="31"/>
    </location>
    <ligand>
        <name>NADPH</name>
        <dbReference type="ChEBI" id="CHEBI:57783"/>
    </ligand>
</feature>
<feature type="binding site" evidence="1">
    <location>
        <position position="32"/>
    </location>
    <ligand>
        <name>NADPH</name>
        <dbReference type="ChEBI" id="CHEBI:57783"/>
    </ligand>
</feature>
<feature type="binding site" evidence="1">
    <location>
        <position position="105"/>
    </location>
    <ligand>
        <name>NADPH</name>
        <dbReference type="ChEBI" id="CHEBI:57783"/>
    </ligand>
</feature>
<feature type="binding site" evidence="1">
    <location>
        <position position="105"/>
    </location>
    <ligand>
        <name>sn-glycerol 3-phosphate</name>
        <dbReference type="ChEBI" id="CHEBI:57597"/>
    </ligand>
</feature>
<feature type="binding site" evidence="1">
    <location>
        <position position="136"/>
    </location>
    <ligand>
        <name>sn-glycerol 3-phosphate</name>
        <dbReference type="ChEBI" id="CHEBI:57597"/>
    </ligand>
</feature>
<feature type="binding site" evidence="1">
    <location>
        <position position="138"/>
    </location>
    <ligand>
        <name>sn-glycerol 3-phosphate</name>
        <dbReference type="ChEBI" id="CHEBI:57597"/>
    </ligand>
</feature>
<feature type="binding site" evidence="1">
    <location>
        <position position="140"/>
    </location>
    <ligand>
        <name>NADPH</name>
        <dbReference type="ChEBI" id="CHEBI:57783"/>
    </ligand>
</feature>
<feature type="binding site" evidence="1">
    <location>
        <position position="191"/>
    </location>
    <ligand>
        <name>sn-glycerol 3-phosphate</name>
        <dbReference type="ChEBI" id="CHEBI:57597"/>
    </ligand>
</feature>
<feature type="binding site" evidence="1">
    <location>
        <position position="244"/>
    </location>
    <ligand>
        <name>sn-glycerol 3-phosphate</name>
        <dbReference type="ChEBI" id="CHEBI:57597"/>
    </ligand>
</feature>
<feature type="binding site" evidence="1">
    <location>
        <position position="254"/>
    </location>
    <ligand>
        <name>sn-glycerol 3-phosphate</name>
        <dbReference type="ChEBI" id="CHEBI:57597"/>
    </ligand>
</feature>
<feature type="binding site" evidence="1">
    <location>
        <position position="255"/>
    </location>
    <ligand>
        <name>NADPH</name>
        <dbReference type="ChEBI" id="CHEBI:57783"/>
    </ligand>
</feature>
<feature type="binding site" evidence="1">
    <location>
        <position position="255"/>
    </location>
    <ligand>
        <name>sn-glycerol 3-phosphate</name>
        <dbReference type="ChEBI" id="CHEBI:57597"/>
    </ligand>
</feature>
<feature type="binding site" evidence="1">
    <location>
        <position position="256"/>
    </location>
    <ligand>
        <name>sn-glycerol 3-phosphate</name>
        <dbReference type="ChEBI" id="CHEBI:57597"/>
    </ligand>
</feature>
<feature type="binding site" evidence="1">
    <location>
        <position position="279"/>
    </location>
    <ligand>
        <name>NADPH</name>
        <dbReference type="ChEBI" id="CHEBI:57783"/>
    </ligand>
</feature>
<feature type="binding site" evidence="1">
    <location>
        <position position="281"/>
    </location>
    <ligand>
        <name>NADPH</name>
        <dbReference type="ChEBI" id="CHEBI:57783"/>
    </ligand>
</feature>
<organism>
    <name type="scientific">Chlorobium limicola (strain DSM 245 / NBRC 103803 / 6330)</name>
    <dbReference type="NCBI Taxonomy" id="290315"/>
    <lineage>
        <taxon>Bacteria</taxon>
        <taxon>Pseudomonadati</taxon>
        <taxon>Chlorobiota</taxon>
        <taxon>Chlorobiia</taxon>
        <taxon>Chlorobiales</taxon>
        <taxon>Chlorobiaceae</taxon>
        <taxon>Chlorobium/Pelodictyon group</taxon>
        <taxon>Chlorobium</taxon>
    </lineage>
</organism>
<keyword id="KW-0963">Cytoplasm</keyword>
<keyword id="KW-0444">Lipid biosynthesis</keyword>
<keyword id="KW-0443">Lipid metabolism</keyword>
<keyword id="KW-0520">NAD</keyword>
<keyword id="KW-0521">NADP</keyword>
<keyword id="KW-0547">Nucleotide-binding</keyword>
<keyword id="KW-0560">Oxidoreductase</keyword>
<keyword id="KW-0594">Phospholipid biosynthesis</keyword>
<keyword id="KW-1208">Phospholipid metabolism</keyword>